<name>THIE_ACTP7</name>
<protein>
    <recommendedName>
        <fullName evidence="1">Thiamine-phosphate synthase</fullName>
        <shortName evidence="1">TP synthase</shortName>
        <shortName evidence="1">TPS</shortName>
        <ecNumber evidence="1">2.5.1.3</ecNumber>
    </recommendedName>
    <alternativeName>
        <fullName evidence="1">Thiamine-phosphate pyrophosphorylase</fullName>
        <shortName evidence="1">TMP pyrophosphorylase</shortName>
        <shortName evidence="1">TMP-PPase</shortName>
    </alternativeName>
</protein>
<feature type="chain" id="PRO_1000093659" description="Thiamine-phosphate synthase">
    <location>
        <begin position="1"/>
        <end position="218"/>
    </location>
</feature>
<feature type="binding site" evidence="1">
    <location>
        <begin position="46"/>
        <end position="50"/>
    </location>
    <ligand>
        <name>4-amino-2-methyl-5-(diphosphooxymethyl)pyrimidine</name>
        <dbReference type="ChEBI" id="CHEBI:57841"/>
    </ligand>
</feature>
<feature type="binding site" evidence="1">
    <location>
        <position position="83"/>
    </location>
    <ligand>
        <name>4-amino-2-methyl-5-(diphosphooxymethyl)pyrimidine</name>
        <dbReference type="ChEBI" id="CHEBI:57841"/>
    </ligand>
</feature>
<feature type="binding site" evidence="1">
    <location>
        <position position="84"/>
    </location>
    <ligand>
        <name>Mg(2+)</name>
        <dbReference type="ChEBI" id="CHEBI:18420"/>
    </ligand>
</feature>
<feature type="binding site" evidence="1">
    <location>
        <position position="103"/>
    </location>
    <ligand>
        <name>Mg(2+)</name>
        <dbReference type="ChEBI" id="CHEBI:18420"/>
    </ligand>
</feature>
<feature type="binding site" evidence="1">
    <location>
        <position position="122"/>
    </location>
    <ligand>
        <name>4-amino-2-methyl-5-(diphosphooxymethyl)pyrimidine</name>
        <dbReference type="ChEBI" id="CHEBI:57841"/>
    </ligand>
</feature>
<feature type="binding site" evidence="1">
    <location>
        <begin position="149"/>
        <end position="151"/>
    </location>
    <ligand>
        <name>2-[(2R,5Z)-2-carboxy-4-methylthiazol-5(2H)-ylidene]ethyl phosphate</name>
        <dbReference type="ChEBI" id="CHEBI:62899"/>
    </ligand>
</feature>
<feature type="binding site" evidence="1">
    <location>
        <position position="152"/>
    </location>
    <ligand>
        <name>4-amino-2-methyl-5-(diphosphooxymethyl)pyrimidine</name>
        <dbReference type="ChEBI" id="CHEBI:57841"/>
    </ligand>
</feature>
<feature type="binding site" evidence="1">
    <location>
        <position position="181"/>
    </location>
    <ligand>
        <name>2-[(2R,5Z)-2-carboxy-4-methylthiazol-5(2H)-ylidene]ethyl phosphate</name>
        <dbReference type="ChEBI" id="CHEBI:62899"/>
    </ligand>
</feature>
<feature type="binding site" evidence="1">
    <location>
        <begin position="201"/>
        <end position="202"/>
    </location>
    <ligand>
        <name>2-[(2R,5Z)-2-carboxy-4-methylthiazol-5(2H)-ylidene]ethyl phosphate</name>
        <dbReference type="ChEBI" id="CHEBI:62899"/>
    </ligand>
</feature>
<evidence type="ECO:0000255" key="1">
    <source>
        <dbReference type="HAMAP-Rule" id="MF_00097"/>
    </source>
</evidence>
<dbReference type="EC" id="2.5.1.3" evidence="1"/>
<dbReference type="EMBL" id="CP001091">
    <property type="protein sequence ID" value="ACE61234.1"/>
    <property type="molecule type" value="Genomic_DNA"/>
</dbReference>
<dbReference type="RefSeq" id="WP_005617021.1">
    <property type="nucleotide sequence ID" value="NC_010939.1"/>
</dbReference>
<dbReference type="SMR" id="B3GX82"/>
<dbReference type="KEGG" id="apa:APP7_0582"/>
<dbReference type="HOGENOM" id="CLU_018272_3_2_6"/>
<dbReference type="UniPathway" id="UPA00060">
    <property type="reaction ID" value="UER00141"/>
</dbReference>
<dbReference type="Proteomes" id="UP000001226">
    <property type="component" value="Chromosome"/>
</dbReference>
<dbReference type="GO" id="GO:0005737">
    <property type="term" value="C:cytoplasm"/>
    <property type="evidence" value="ECO:0007669"/>
    <property type="project" value="TreeGrafter"/>
</dbReference>
<dbReference type="GO" id="GO:0000287">
    <property type="term" value="F:magnesium ion binding"/>
    <property type="evidence" value="ECO:0007669"/>
    <property type="project" value="UniProtKB-UniRule"/>
</dbReference>
<dbReference type="GO" id="GO:0004789">
    <property type="term" value="F:thiamine-phosphate diphosphorylase activity"/>
    <property type="evidence" value="ECO:0007669"/>
    <property type="project" value="UniProtKB-UniRule"/>
</dbReference>
<dbReference type="GO" id="GO:0009228">
    <property type="term" value="P:thiamine biosynthetic process"/>
    <property type="evidence" value="ECO:0007669"/>
    <property type="project" value="UniProtKB-KW"/>
</dbReference>
<dbReference type="GO" id="GO:0009229">
    <property type="term" value="P:thiamine diphosphate biosynthetic process"/>
    <property type="evidence" value="ECO:0007669"/>
    <property type="project" value="UniProtKB-UniRule"/>
</dbReference>
<dbReference type="CDD" id="cd00564">
    <property type="entry name" value="TMP_TenI"/>
    <property type="match status" value="1"/>
</dbReference>
<dbReference type="FunFam" id="3.20.20.70:FF:000096">
    <property type="entry name" value="Thiamine-phosphate synthase"/>
    <property type="match status" value="1"/>
</dbReference>
<dbReference type="Gene3D" id="3.20.20.70">
    <property type="entry name" value="Aldolase class I"/>
    <property type="match status" value="1"/>
</dbReference>
<dbReference type="HAMAP" id="MF_00097">
    <property type="entry name" value="TMP_synthase"/>
    <property type="match status" value="1"/>
</dbReference>
<dbReference type="InterPro" id="IPR013785">
    <property type="entry name" value="Aldolase_TIM"/>
</dbReference>
<dbReference type="InterPro" id="IPR036206">
    <property type="entry name" value="ThiamineP_synth_sf"/>
</dbReference>
<dbReference type="InterPro" id="IPR022998">
    <property type="entry name" value="ThiamineP_synth_TenI"/>
</dbReference>
<dbReference type="InterPro" id="IPR034291">
    <property type="entry name" value="TMP_synthase"/>
</dbReference>
<dbReference type="NCBIfam" id="TIGR00693">
    <property type="entry name" value="thiE"/>
    <property type="match status" value="1"/>
</dbReference>
<dbReference type="PANTHER" id="PTHR20857">
    <property type="entry name" value="THIAMINE-PHOSPHATE PYROPHOSPHORYLASE"/>
    <property type="match status" value="1"/>
</dbReference>
<dbReference type="PANTHER" id="PTHR20857:SF15">
    <property type="entry name" value="THIAMINE-PHOSPHATE SYNTHASE"/>
    <property type="match status" value="1"/>
</dbReference>
<dbReference type="Pfam" id="PF02581">
    <property type="entry name" value="TMP-TENI"/>
    <property type="match status" value="1"/>
</dbReference>
<dbReference type="SUPFAM" id="SSF51391">
    <property type="entry name" value="Thiamin phosphate synthase"/>
    <property type="match status" value="1"/>
</dbReference>
<organism>
    <name type="scientific">Actinobacillus pleuropneumoniae serotype 7 (strain AP76)</name>
    <dbReference type="NCBI Taxonomy" id="537457"/>
    <lineage>
        <taxon>Bacteria</taxon>
        <taxon>Pseudomonadati</taxon>
        <taxon>Pseudomonadota</taxon>
        <taxon>Gammaproteobacteria</taxon>
        <taxon>Pasteurellales</taxon>
        <taxon>Pasteurellaceae</taxon>
        <taxon>Actinobacillus</taxon>
    </lineage>
</organism>
<gene>
    <name evidence="1" type="primary">thiE</name>
    <name type="ordered locus">APP7_0582</name>
</gene>
<reference key="1">
    <citation type="submission" date="2008-06" db="EMBL/GenBank/DDBJ databases">
        <title>Genome and proteome analysis of A. pleuropneumoniae serotype 7.</title>
        <authorList>
            <person name="Linke B."/>
            <person name="Buettner F."/>
            <person name="Martinez-Arias R."/>
            <person name="Goesmann A."/>
            <person name="Baltes N."/>
            <person name="Tegetmeyer H."/>
            <person name="Singh M."/>
            <person name="Gerlach G.F."/>
        </authorList>
    </citation>
    <scope>NUCLEOTIDE SEQUENCE [LARGE SCALE GENOMIC DNA]</scope>
    <source>
        <strain>AP76</strain>
    </source>
</reference>
<accession>B3GX82</accession>
<comment type="function">
    <text evidence="1">Condenses 4-methyl-5-(beta-hydroxyethyl)thiazole monophosphate (THZ-P) and 2-methyl-4-amino-5-hydroxymethyl pyrimidine pyrophosphate (HMP-PP) to form thiamine monophosphate (TMP).</text>
</comment>
<comment type="catalytic activity">
    <reaction evidence="1">
        <text>2-[(2R,5Z)-2-carboxy-4-methylthiazol-5(2H)-ylidene]ethyl phosphate + 4-amino-2-methyl-5-(diphosphooxymethyl)pyrimidine + 2 H(+) = thiamine phosphate + CO2 + diphosphate</text>
        <dbReference type="Rhea" id="RHEA:47844"/>
        <dbReference type="ChEBI" id="CHEBI:15378"/>
        <dbReference type="ChEBI" id="CHEBI:16526"/>
        <dbReference type="ChEBI" id="CHEBI:33019"/>
        <dbReference type="ChEBI" id="CHEBI:37575"/>
        <dbReference type="ChEBI" id="CHEBI:57841"/>
        <dbReference type="ChEBI" id="CHEBI:62899"/>
        <dbReference type="EC" id="2.5.1.3"/>
    </reaction>
</comment>
<comment type="catalytic activity">
    <reaction evidence="1">
        <text>2-(2-carboxy-4-methylthiazol-5-yl)ethyl phosphate + 4-amino-2-methyl-5-(diphosphooxymethyl)pyrimidine + 2 H(+) = thiamine phosphate + CO2 + diphosphate</text>
        <dbReference type="Rhea" id="RHEA:47848"/>
        <dbReference type="ChEBI" id="CHEBI:15378"/>
        <dbReference type="ChEBI" id="CHEBI:16526"/>
        <dbReference type="ChEBI" id="CHEBI:33019"/>
        <dbReference type="ChEBI" id="CHEBI:37575"/>
        <dbReference type="ChEBI" id="CHEBI:57841"/>
        <dbReference type="ChEBI" id="CHEBI:62890"/>
        <dbReference type="EC" id="2.5.1.3"/>
    </reaction>
</comment>
<comment type="catalytic activity">
    <reaction evidence="1">
        <text>4-methyl-5-(2-phosphooxyethyl)-thiazole + 4-amino-2-methyl-5-(diphosphooxymethyl)pyrimidine + H(+) = thiamine phosphate + diphosphate</text>
        <dbReference type="Rhea" id="RHEA:22328"/>
        <dbReference type="ChEBI" id="CHEBI:15378"/>
        <dbReference type="ChEBI" id="CHEBI:33019"/>
        <dbReference type="ChEBI" id="CHEBI:37575"/>
        <dbReference type="ChEBI" id="CHEBI:57841"/>
        <dbReference type="ChEBI" id="CHEBI:58296"/>
        <dbReference type="EC" id="2.5.1.3"/>
    </reaction>
</comment>
<comment type="cofactor">
    <cofactor evidence="1">
        <name>Mg(2+)</name>
        <dbReference type="ChEBI" id="CHEBI:18420"/>
    </cofactor>
    <text evidence="1">Binds 1 Mg(2+) ion per subunit.</text>
</comment>
<comment type="pathway">
    <text evidence="1">Cofactor biosynthesis; thiamine diphosphate biosynthesis; thiamine phosphate from 4-amino-2-methyl-5-diphosphomethylpyrimidine and 4-methyl-5-(2-phosphoethyl)-thiazole: step 1/1.</text>
</comment>
<comment type="similarity">
    <text evidence="1">Belongs to the thiamine-phosphate synthase family.</text>
</comment>
<keyword id="KW-0460">Magnesium</keyword>
<keyword id="KW-0479">Metal-binding</keyword>
<keyword id="KW-0784">Thiamine biosynthesis</keyword>
<keyword id="KW-0808">Transferase</keyword>
<proteinExistence type="inferred from homology"/>
<sequence>MYDIRQMLQLYFIAGTQDCPNPTEDRSQNLLLILEQALQAGITCFQFRDKSKNSLEDQPNAQKALAIQCRDLCRLYNVPFIVDDNVALAIEIDADGVHVGQKDMSPIMIRQMTDKPLIIGLSNNTLEDLWRSEQMIEVDYCGLGPVFPTNSKEKHNPPIGLDFVKKAREAGIRKPIVSIGGVKAEHVATLKQNGADGVAVITAISLASDVSQAVKRLL</sequence>